<dbReference type="EC" id="3.6.1.7"/>
<dbReference type="EMBL" id="CP000511">
    <property type="protein sequence ID" value="ABM12989.1"/>
    <property type="molecule type" value="Genomic_DNA"/>
</dbReference>
<dbReference type="SMR" id="A1T739"/>
<dbReference type="STRING" id="350058.Mvan_2174"/>
<dbReference type="KEGG" id="mva:Mvan_2174"/>
<dbReference type="eggNOG" id="COG1254">
    <property type="taxonomic scope" value="Bacteria"/>
</dbReference>
<dbReference type="HOGENOM" id="CLU_141932_3_0_11"/>
<dbReference type="Proteomes" id="UP000009159">
    <property type="component" value="Chromosome"/>
</dbReference>
<dbReference type="GO" id="GO:0003998">
    <property type="term" value="F:acylphosphatase activity"/>
    <property type="evidence" value="ECO:0007669"/>
    <property type="project" value="UniProtKB-EC"/>
</dbReference>
<dbReference type="Gene3D" id="3.30.70.100">
    <property type="match status" value="1"/>
</dbReference>
<dbReference type="InterPro" id="IPR020456">
    <property type="entry name" value="Acylphosphatase"/>
</dbReference>
<dbReference type="InterPro" id="IPR001792">
    <property type="entry name" value="Acylphosphatase-like_dom"/>
</dbReference>
<dbReference type="InterPro" id="IPR036046">
    <property type="entry name" value="Acylphosphatase-like_dom_sf"/>
</dbReference>
<dbReference type="InterPro" id="IPR017968">
    <property type="entry name" value="Acylphosphatase_CS"/>
</dbReference>
<dbReference type="NCBIfam" id="NF010997">
    <property type="entry name" value="PRK14422.1"/>
    <property type="match status" value="1"/>
</dbReference>
<dbReference type="PANTHER" id="PTHR47268">
    <property type="entry name" value="ACYLPHOSPHATASE"/>
    <property type="match status" value="1"/>
</dbReference>
<dbReference type="PANTHER" id="PTHR47268:SF4">
    <property type="entry name" value="ACYLPHOSPHATASE"/>
    <property type="match status" value="1"/>
</dbReference>
<dbReference type="Pfam" id="PF00708">
    <property type="entry name" value="Acylphosphatase"/>
    <property type="match status" value="1"/>
</dbReference>
<dbReference type="SUPFAM" id="SSF54975">
    <property type="entry name" value="Acylphosphatase/BLUF domain-like"/>
    <property type="match status" value="1"/>
</dbReference>
<dbReference type="PROSITE" id="PS00150">
    <property type="entry name" value="ACYLPHOSPHATASE_1"/>
    <property type="match status" value="1"/>
</dbReference>
<dbReference type="PROSITE" id="PS00151">
    <property type="entry name" value="ACYLPHOSPHATASE_2"/>
    <property type="match status" value="1"/>
</dbReference>
<dbReference type="PROSITE" id="PS51160">
    <property type="entry name" value="ACYLPHOSPHATASE_3"/>
    <property type="match status" value="1"/>
</dbReference>
<proteinExistence type="inferred from homology"/>
<keyword id="KW-0378">Hydrolase</keyword>
<organism>
    <name type="scientific">Mycolicibacterium vanbaalenii (strain DSM 7251 / JCM 13017 / BCRC 16820 / KCTC 9966 / NRRL B-24157 / PYR-1)</name>
    <name type="common">Mycobacterium vanbaalenii</name>
    <dbReference type="NCBI Taxonomy" id="350058"/>
    <lineage>
        <taxon>Bacteria</taxon>
        <taxon>Bacillati</taxon>
        <taxon>Actinomycetota</taxon>
        <taxon>Actinomycetes</taxon>
        <taxon>Mycobacteriales</taxon>
        <taxon>Mycobacteriaceae</taxon>
        <taxon>Mycolicibacterium</taxon>
    </lineage>
</organism>
<protein>
    <recommendedName>
        <fullName>Acylphosphatase</fullName>
        <ecNumber>3.6.1.7</ecNumber>
    </recommendedName>
    <alternativeName>
        <fullName>Acylphosphate phosphohydrolase</fullName>
    </alternativeName>
</protein>
<feature type="chain" id="PRO_0000326755" description="Acylphosphatase">
    <location>
        <begin position="1"/>
        <end position="93"/>
    </location>
</feature>
<feature type="domain" description="Acylphosphatase-like" evidence="1">
    <location>
        <begin position="7"/>
        <end position="93"/>
    </location>
</feature>
<feature type="active site" evidence="1">
    <location>
        <position position="22"/>
    </location>
</feature>
<feature type="active site" evidence="1">
    <location>
        <position position="40"/>
    </location>
</feature>
<comment type="catalytic activity">
    <reaction>
        <text>an acyl phosphate + H2O = a carboxylate + phosphate + H(+)</text>
        <dbReference type="Rhea" id="RHEA:14965"/>
        <dbReference type="ChEBI" id="CHEBI:15377"/>
        <dbReference type="ChEBI" id="CHEBI:15378"/>
        <dbReference type="ChEBI" id="CHEBI:29067"/>
        <dbReference type="ChEBI" id="CHEBI:43474"/>
        <dbReference type="ChEBI" id="CHEBI:59918"/>
        <dbReference type="EC" id="3.6.1.7"/>
    </reaction>
</comment>
<comment type="similarity">
    <text evidence="2">Belongs to the acylphosphatase family.</text>
</comment>
<evidence type="ECO:0000255" key="1">
    <source>
        <dbReference type="PROSITE-ProRule" id="PRU00520"/>
    </source>
</evidence>
<evidence type="ECO:0000305" key="2"/>
<sequence>MGESDVRLTAWVHGRVQGVGFRWWTRSRALELGLTGYAANKPDGRVQVVAQGSRAACERLLDLLTGGNTPGHVDKVISDWGEPADAIAGFTER</sequence>
<reference key="1">
    <citation type="submission" date="2006-12" db="EMBL/GenBank/DDBJ databases">
        <title>Complete sequence of Mycobacterium vanbaalenii PYR-1.</title>
        <authorList>
            <consortium name="US DOE Joint Genome Institute"/>
            <person name="Copeland A."/>
            <person name="Lucas S."/>
            <person name="Lapidus A."/>
            <person name="Barry K."/>
            <person name="Detter J.C."/>
            <person name="Glavina del Rio T."/>
            <person name="Hammon N."/>
            <person name="Israni S."/>
            <person name="Dalin E."/>
            <person name="Tice H."/>
            <person name="Pitluck S."/>
            <person name="Singan V."/>
            <person name="Schmutz J."/>
            <person name="Larimer F."/>
            <person name="Land M."/>
            <person name="Hauser L."/>
            <person name="Kyrpides N."/>
            <person name="Anderson I.J."/>
            <person name="Miller C."/>
            <person name="Richardson P."/>
        </authorList>
    </citation>
    <scope>NUCLEOTIDE SEQUENCE [LARGE SCALE GENOMIC DNA]</scope>
    <source>
        <strain>DSM 7251 / JCM 13017 / BCRC 16820 / KCTC 9966 / NRRL B-24157 / PYR-1</strain>
    </source>
</reference>
<gene>
    <name type="primary">acyP</name>
    <name type="ordered locus">Mvan_2174</name>
</gene>
<name>ACYP_MYCVP</name>
<accession>A1T739</accession>